<organism>
    <name type="scientific">Escherichia coli (strain SE11)</name>
    <dbReference type="NCBI Taxonomy" id="409438"/>
    <lineage>
        <taxon>Bacteria</taxon>
        <taxon>Pseudomonadati</taxon>
        <taxon>Pseudomonadota</taxon>
        <taxon>Gammaproteobacteria</taxon>
        <taxon>Enterobacterales</taxon>
        <taxon>Enterobacteriaceae</taxon>
        <taxon>Escherichia</taxon>
    </lineage>
</organism>
<evidence type="ECO:0000255" key="1">
    <source>
        <dbReference type="HAMAP-Rule" id="MF_00692"/>
    </source>
</evidence>
<protein>
    <recommendedName>
        <fullName evidence="1">Protein nucleotidyltransferase YdiU</fullName>
        <ecNumber evidence="1">2.7.7.-</ecNumber>
    </recommendedName>
    <alternativeName>
        <fullName evidence="1">Protein adenylyltransferase YdiU</fullName>
        <ecNumber evidence="1">2.7.7.108</ecNumber>
    </alternativeName>
    <alternativeName>
        <fullName evidence="1">Protein uridylyltransferase YdiU</fullName>
        <ecNumber evidence="1">2.7.7.-</ecNumber>
    </alternativeName>
</protein>
<feature type="chain" id="PRO_1000132110" description="Protein nucleotidyltransferase YdiU">
    <location>
        <begin position="1"/>
        <end position="478"/>
    </location>
</feature>
<feature type="active site" description="Proton acceptor" evidence="1">
    <location>
        <position position="246"/>
    </location>
</feature>
<feature type="binding site" evidence="1">
    <location>
        <position position="84"/>
    </location>
    <ligand>
        <name>ATP</name>
        <dbReference type="ChEBI" id="CHEBI:30616"/>
    </ligand>
</feature>
<feature type="binding site" evidence="1">
    <location>
        <position position="86"/>
    </location>
    <ligand>
        <name>ATP</name>
        <dbReference type="ChEBI" id="CHEBI:30616"/>
    </ligand>
</feature>
<feature type="binding site" evidence="1">
    <location>
        <position position="87"/>
    </location>
    <ligand>
        <name>ATP</name>
        <dbReference type="ChEBI" id="CHEBI:30616"/>
    </ligand>
</feature>
<feature type="binding site" evidence="1">
    <location>
        <position position="107"/>
    </location>
    <ligand>
        <name>ATP</name>
        <dbReference type="ChEBI" id="CHEBI:30616"/>
    </ligand>
</feature>
<feature type="binding site" evidence="1">
    <location>
        <position position="119"/>
    </location>
    <ligand>
        <name>ATP</name>
        <dbReference type="ChEBI" id="CHEBI:30616"/>
    </ligand>
</feature>
<feature type="binding site" evidence="1">
    <location>
        <position position="120"/>
    </location>
    <ligand>
        <name>ATP</name>
        <dbReference type="ChEBI" id="CHEBI:30616"/>
    </ligand>
</feature>
<feature type="binding site" evidence="1">
    <location>
        <position position="170"/>
    </location>
    <ligand>
        <name>ATP</name>
        <dbReference type="ChEBI" id="CHEBI:30616"/>
    </ligand>
</feature>
<feature type="binding site" evidence="1">
    <location>
        <position position="177"/>
    </location>
    <ligand>
        <name>ATP</name>
        <dbReference type="ChEBI" id="CHEBI:30616"/>
    </ligand>
</feature>
<feature type="binding site" evidence="1">
    <location>
        <position position="247"/>
    </location>
    <ligand>
        <name>Mg(2+)</name>
        <dbReference type="ChEBI" id="CHEBI:18420"/>
    </ligand>
</feature>
<feature type="binding site" evidence="1">
    <location>
        <position position="256"/>
    </location>
    <ligand>
        <name>ATP</name>
        <dbReference type="ChEBI" id="CHEBI:30616"/>
    </ligand>
</feature>
<feature type="binding site" evidence="1">
    <location>
        <position position="256"/>
    </location>
    <ligand>
        <name>Mg(2+)</name>
        <dbReference type="ChEBI" id="CHEBI:18420"/>
    </ligand>
</feature>
<proteinExistence type="inferred from homology"/>
<accession>B6I8R1</accession>
<keyword id="KW-0067">ATP-binding</keyword>
<keyword id="KW-0460">Magnesium</keyword>
<keyword id="KW-0464">Manganese</keyword>
<keyword id="KW-0479">Metal-binding</keyword>
<keyword id="KW-0547">Nucleotide-binding</keyword>
<keyword id="KW-0548">Nucleotidyltransferase</keyword>
<keyword id="KW-0808">Transferase</keyword>
<name>SELO_ECOSE</name>
<sequence length="478" mass="54500">MTLSFITRWRDELPETYTALSPTPLNNARLIWHNTELANTLSIPSSLFKNAAGVWGGETLLPGMSPLAQVYSGHQFGVWAGQLGDGRGILLGEQLLADGTTMDWHLKGAGLTPYSRMGDGRAVLRSTIRESLASEAMHYLGIPTTRALSIVTSDSPVYRETVEPGAMLIRVAPSHLRFGHFEHFYYRREPEKVRQLADFAIRHYWSHLEDDEDKYRLWFNDVVARTASLIAQWQTVGFAHGVMNTDNMSLLGLTLDYGPFGFLDDYEPGFICNHSDHQGRYSFDNQPAVALWNLQRLAQTLSPFVAVDALNEALDSYQQVLLTHYGQRMRQKLGFMTEQKEDNALLNELFSLMARERSDYTRTFRMLSLTEQHSAASPLRDEFIDRAAFDDWFARYRGRLQQDEVSDSERQQLMQSVNPALVLRNWLAQRAIEAAEKGDMTELHRLHEALRNPFSDRADDYVSRPPDWGKRLEVSCSS</sequence>
<reference key="1">
    <citation type="journal article" date="2008" name="DNA Res.">
        <title>Complete genome sequence and comparative analysis of the wild-type commensal Escherichia coli strain SE11 isolated from a healthy adult.</title>
        <authorList>
            <person name="Oshima K."/>
            <person name="Toh H."/>
            <person name="Ogura Y."/>
            <person name="Sasamoto H."/>
            <person name="Morita H."/>
            <person name="Park S.-H."/>
            <person name="Ooka T."/>
            <person name="Iyoda S."/>
            <person name="Taylor T.D."/>
            <person name="Hayashi T."/>
            <person name="Itoh K."/>
            <person name="Hattori M."/>
        </authorList>
    </citation>
    <scope>NUCLEOTIDE SEQUENCE [LARGE SCALE GENOMIC DNA]</scope>
    <source>
        <strain>SE11</strain>
    </source>
</reference>
<comment type="function">
    <text evidence="1">Nucleotidyltransferase involved in the post-translational modification of proteins. It can catalyze the addition of adenosine monophosphate (AMP) or uridine monophosphate (UMP) to a protein, resulting in modifications known as AMPylation and UMPylation.</text>
</comment>
<comment type="catalytic activity">
    <reaction evidence="1">
        <text>L-seryl-[protein] + ATP = 3-O-(5'-adenylyl)-L-seryl-[protein] + diphosphate</text>
        <dbReference type="Rhea" id="RHEA:58120"/>
        <dbReference type="Rhea" id="RHEA-COMP:9863"/>
        <dbReference type="Rhea" id="RHEA-COMP:15073"/>
        <dbReference type="ChEBI" id="CHEBI:29999"/>
        <dbReference type="ChEBI" id="CHEBI:30616"/>
        <dbReference type="ChEBI" id="CHEBI:33019"/>
        <dbReference type="ChEBI" id="CHEBI:142516"/>
        <dbReference type="EC" id="2.7.7.108"/>
    </reaction>
</comment>
<comment type="catalytic activity">
    <reaction evidence="1">
        <text>L-threonyl-[protein] + ATP = 3-O-(5'-adenylyl)-L-threonyl-[protein] + diphosphate</text>
        <dbReference type="Rhea" id="RHEA:54292"/>
        <dbReference type="Rhea" id="RHEA-COMP:11060"/>
        <dbReference type="Rhea" id="RHEA-COMP:13847"/>
        <dbReference type="ChEBI" id="CHEBI:30013"/>
        <dbReference type="ChEBI" id="CHEBI:30616"/>
        <dbReference type="ChEBI" id="CHEBI:33019"/>
        <dbReference type="ChEBI" id="CHEBI:138113"/>
        <dbReference type="EC" id="2.7.7.108"/>
    </reaction>
</comment>
<comment type="catalytic activity">
    <reaction evidence="1">
        <text>L-tyrosyl-[protein] + ATP = O-(5'-adenylyl)-L-tyrosyl-[protein] + diphosphate</text>
        <dbReference type="Rhea" id="RHEA:54288"/>
        <dbReference type="Rhea" id="RHEA-COMP:10136"/>
        <dbReference type="Rhea" id="RHEA-COMP:13846"/>
        <dbReference type="ChEBI" id="CHEBI:30616"/>
        <dbReference type="ChEBI" id="CHEBI:33019"/>
        <dbReference type="ChEBI" id="CHEBI:46858"/>
        <dbReference type="ChEBI" id="CHEBI:83624"/>
        <dbReference type="EC" id="2.7.7.108"/>
    </reaction>
</comment>
<comment type="catalytic activity">
    <reaction evidence="1">
        <text>L-histidyl-[protein] + UTP = N(tele)-(5'-uridylyl)-L-histidyl-[protein] + diphosphate</text>
        <dbReference type="Rhea" id="RHEA:83891"/>
        <dbReference type="Rhea" id="RHEA-COMP:9745"/>
        <dbReference type="Rhea" id="RHEA-COMP:20239"/>
        <dbReference type="ChEBI" id="CHEBI:29979"/>
        <dbReference type="ChEBI" id="CHEBI:33019"/>
        <dbReference type="ChEBI" id="CHEBI:46398"/>
        <dbReference type="ChEBI" id="CHEBI:233474"/>
    </reaction>
</comment>
<comment type="catalytic activity">
    <reaction evidence="1">
        <text>L-seryl-[protein] + UTP = O-(5'-uridylyl)-L-seryl-[protein] + diphosphate</text>
        <dbReference type="Rhea" id="RHEA:64604"/>
        <dbReference type="Rhea" id="RHEA-COMP:9863"/>
        <dbReference type="Rhea" id="RHEA-COMP:16635"/>
        <dbReference type="ChEBI" id="CHEBI:29999"/>
        <dbReference type="ChEBI" id="CHEBI:33019"/>
        <dbReference type="ChEBI" id="CHEBI:46398"/>
        <dbReference type="ChEBI" id="CHEBI:156051"/>
    </reaction>
</comment>
<comment type="catalytic activity">
    <reaction evidence="1">
        <text>L-tyrosyl-[protein] + UTP = O-(5'-uridylyl)-L-tyrosyl-[protein] + diphosphate</text>
        <dbReference type="Rhea" id="RHEA:83887"/>
        <dbReference type="Rhea" id="RHEA-COMP:10136"/>
        <dbReference type="Rhea" id="RHEA-COMP:20238"/>
        <dbReference type="ChEBI" id="CHEBI:33019"/>
        <dbReference type="ChEBI" id="CHEBI:46398"/>
        <dbReference type="ChEBI" id="CHEBI:46858"/>
        <dbReference type="ChEBI" id="CHEBI:90602"/>
    </reaction>
</comment>
<comment type="cofactor">
    <cofactor evidence="1">
        <name>Mg(2+)</name>
        <dbReference type="ChEBI" id="CHEBI:18420"/>
    </cofactor>
    <cofactor evidence="1">
        <name>Mn(2+)</name>
        <dbReference type="ChEBI" id="CHEBI:29035"/>
    </cofactor>
</comment>
<comment type="similarity">
    <text evidence="1">Belongs to the SELO family.</text>
</comment>
<dbReference type="EC" id="2.7.7.-" evidence="1"/>
<dbReference type="EC" id="2.7.7.108" evidence="1"/>
<dbReference type="EMBL" id="AP009240">
    <property type="protein sequence ID" value="BAG77355.1"/>
    <property type="molecule type" value="Genomic_DNA"/>
</dbReference>
<dbReference type="RefSeq" id="WP_000175617.1">
    <property type="nucleotide sequence ID" value="NC_011415.1"/>
</dbReference>
<dbReference type="SMR" id="B6I8R1"/>
<dbReference type="KEGG" id="ecy:ECSE_1831"/>
<dbReference type="HOGENOM" id="CLU_010245_4_0_6"/>
<dbReference type="Proteomes" id="UP000008199">
    <property type="component" value="Chromosome"/>
</dbReference>
<dbReference type="GO" id="GO:0070733">
    <property type="term" value="F:AMPylase activity"/>
    <property type="evidence" value="ECO:0007669"/>
    <property type="project" value="RHEA"/>
</dbReference>
<dbReference type="GO" id="GO:0005524">
    <property type="term" value="F:ATP binding"/>
    <property type="evidence" value="ECO:0007669"/>
    <property type="project" value="UniProtKB-UniRule"/>
</dbReference>
<dbReference type="GO" id="GO:0000287">
    <property type="term" value="F:magnesium ion binding"/>
    <property type="evidence" value="ECO:0007669"/>
    <property type="project" value="UniProtKB-UniRule"/>
</dbReference>
<dbReference type="HAMAP" id="MF_00692">
    <property type="entry name" value="YdiU_SelO"/>
    <property type="match status" value="1"/>
</dbReference>
<dbReference type="InterPro" id="IPR054838">
    <property type="entry name" value="adnlytase_SelO"/>
</dbReference>
<dbReference type="InterPro" id="IPR003846">
    <property type="entry name" value="SelO"/>
</dbReference>
<dbReference type="NCBIfam" id="NF040880">
    <property type="entry name" value="adnlytase_SelO"/>
    <property type="match status" value="1"/>
</dbReference>
<dbReference type="NCBIfam" id="NF000658">
    <property type="entry name" value="PRK00029.1"/>
    <property type="match status" value="1"/>
</dbReference>
<dbReference type="PANTHER" id="PTHR32057">
    <property type="entry name" value="PROTEIN ADENYLYLTRANSFERASE SELO, MITOCHONDRIAL"/>
    <property type="match status" value="1"/>
</dbReference>
<dbReference type="PANTHER" id="PTHR32057:SF14">
    <property type="entry name" value="PROTEIN ADENYLYLTRANSFERASE SELO, MITOCHONDRIAL"/>
    <property type="match status" value="1"/>
</dbReference>
<dbReference type="Pfam" id="PF02696">
    <property type="entry name" value="SelO"/>
    <property type="match status" value="1"/>
</dbReference>
<gene>
    <name evidence="1" type="primary">ydiU</name>
    <name evidence="1" type="synonym">selO</name>
    <name type="ordered locus">ECSE_1831</name>
</gene>